<proteinExistence type="inferred from homology"/>
<organism>
    <name type="scientific">Clostridium perfringens (strain ATCC 13124 / DSM 756 / JCM 1290 / NCIMB 6125 / NCTC 8237 / Type A)</name>
    <dbReference type="NCBI Taxonomy" id="195103"/>
    <lineage>
        <taxon>Bacteria</taxon>
        <taxon>Bacillati</taxon>
        <taxon>Bacillota</taxon>
        <taxon>Clostridia</taxon>
        <taxon>Eubacteriales</taxon>
        <taxon>Clostridiaceae</taxon>
        <taxon>Clostridium</taxon>
    </lineage>
</organism>
<keyword id="KW-0170">Cobalt</keyword>
<keyword id="KW-0456">Lyase</keyword>
<keyword id="KW-0464">Manganese</keyword>
<protein>
    <recommendedName>
        <fullName evidence="1">Inosose dehydratase</fullName>
        <ecNumber evidence="1">4.2.1.44</ecNumber>
    </recommendedName>
    <alternativeName>
        <fullName evidence="1">2-keto-myo-inositol dehydratase</fullName>
        <shortName evidence="1">2KMI dehydratase</shortName>
    </alternativeName>
</protein>
<reference key="1">
    <citation type="journal article" date="2006" name="Genome Res.">
        <title>Skewed genomic variability in strains of the toxigenic bacterial pathogen, Clostridium perfringens.</title>
        <authorList>
            <person name="Myers G.S.A."/>
            <person name="Rasko D.A."/>
            <person name="Cheung J.K."/>
            <person name="Ravel J."/>
            <person name="Seshadri R."/>
            <person name="DeBoy R.T."/>
            <person name="Ren Q."/>
            <person name="Varga J."/>
            <person name="Awad M.M."/>
            <person name="Brinkac L.M."/>
            <person name="Daugherty S.C."/>
            <person name="Haft D.H."/>
            <person name="Dodson R.J."/>
            <person name="Madupu R."/>
            <person name="Nelson W.C."/>
            <person name="Rosovitz M.J."/>
            <person name="Sullivan S.A."/>
            <person name="Khouri H."/>
            <person name="Dimitrov G.I."/>
            <person name="Watkins K.L."/>
            <person name="Mulligan S."/>
            <person name="Benton J."/>
            <person name="Radune D."/>
            <person name="Fisher D.J."/>
            <person name="Atkins H.S."/>
            <person name="Hiscox T."/>
            <person name="Jost B.H."/>
            <person name="Billington S.J."/>
            <person name="Songer J.G."/>
            <person name="McClane B.A."/>
            <person name="Titball R.W."/>
            <person name="Rood J.I."/>
            <person name="Melville S.B."/>
            <person name="Paulsen I.T."/>
        </authorList>
    </citation>
    <scope>NUCLEOTIDE SEQUENCE [LARGE SCALE GENOMIC DNA]</scope>
    <source>
        <strain>ATCC 13124 / DSM 756 / JCM 1290 / NCIMB 6125 / NCTC 8237 / S 107 / Type A</strain>
    </source>
</reference>
<dbReference type="EC" id="4.2.1.44" evidence="1"/>
<dbReference type="EMBL" id="CP000246">
    <property type="protein sequence ID" value="ABG83745.1"/>
    <property type="molecule type" value="Genomic_DNA"/>
</dbReference>
<dbReference type="RefSeq" id="WP_003459953.1">
    <property type="nucleotide sequence ID" value="NC_008261.1"/>
</dbReference>
<dbReference type="SMR" id="Q0TUZ0"/>
<dbReference type="STRING" id="195103.CPF_0086"/>
<dbReference type="PaxDb" id="195103-CPF_0086"/>
<dbReference type="GeneID" id="93000603"/>
<dbReference type="KEGG" id="cpf:CPF_0086"/>
<dbReference type="eggNOG" id="COG1082">
    <property type="taxonomic scope" value="Bacteria"/>
</dbReference>
<dbReference type="HOGENOM" id="CLU_059523_0_0_9"/>
<dbReference type="UniPathway" id="UPA00076">
    <property type="reaction ID" value="UER00144"/>
</dbReference>
<dbReference type="Proteomes" id="UP000001823">
    <property type="component" value="Chromosome"/>
</dbReference>
<dbReference type="GO" id="GO:0030145">
    <property type="term" value="F:manganese ion binding"/>
    <property type="evidence" value="ECO:0007669"/>
    <property type="project" value="UniProtKB-UniRule"/>
</dbReference>
<dbReference type="GO" id="GO:0050114">
    <property type="term" value="F:myo-inosose-2 dehydratase activity"/>
    <property type="evidence" value="ECO:0007669"/>
    <property type="project" value="UniProtKB-UniRule"/>
</dbReference>
<dbReference type="GO" id="GO:0019310">
    <property type="term" value="P:inositol catabolic process"/>
    <property type="evidence" value="ECO:0007669"/>
    <property type="project" value="UniProtKB-UniRule"/>
</dbReference>
<dbReference type="Gene3D" id="3.20.20.150">
    <property type="entry name" value="Divalent-metal-dependent TIM barrel enzymes"/>
    <property type="match status" value="1"/>
</dbReference>
<dbReference type="HAMAP" id="MF_01672">
    <property type="entry name" value="IolE"/>
    <property type="match status" value="1"/>
</dbReference>
<dbReference type="InterPro" id="IPR023952">
    <property type="entry name" value="IolE"/>
</dbReference>
<dbReference type="InterPro" id="IPR030823">
    <property type="entry name" value="IolE/MocC"/>
</dbReference>
<dbReference type="InterPro" id="IPR050312">
    <property type="entry name" value="IolE/XylAMocC-like"/>
</dbReference>
<dbReference type="InterPro" id="IPR036237">
    <property type="entry name" value="Xyl_isomerase-like_sf"/>
</dbReference>
<dbReference type="InterPro" id="IPR013022">
    <property type="entry name" value="Xyl_isomerase-like_TIM-brl"/>
</dbReference>
<dbReference type="NCBIfam" id="TIGR04379">
    <property type="entry name" value="myo_inos_iolE"/>
    <property type="match status" value="1"/>
</dbReference>
<dbReference type="PANTHER" id="PTHR12110">
    <property type="entry name" value="HYDROXYPYRUVATE ISOMERASE"/>
    <property type="match status" value="1"/>
</dbReference>
<dbReference type="PANTHER" id="PTHR12110:SF41">
    <property type="entry name" value="INOSOSE DEHYDRATASE"/>
    <property type="match status" value="1"/>
</dbReference>
<dbReference type="Pfam" id="PF01261">
    <property type="entry name" value="AP_endonuc_2"/>
    <property type="match status" value="1"/>
</dbReference>
<dbReference type="SUPFAM" id="SSF51658">
    <property type="entry name" value="Xylose isomerase-like"/>
    <property type="match status" value="1"/>
</dbReference>
<accession>Q0TUZ0</accession>
<comment type="function">
    <text evidence="1">Catalyzes the dehydration of inosose (2-keto-myo-inositol, 2KMI or 2,4,6/3,5-pentahydroxycyclohexanone) to 3D-(3,5/4)-trihydroxycyclohexane-1,2-dione (D-2,3-diketo-4-deoxy-epi-inositol).</text>
</comment>
<comment type="catalytic activity">
    <reaction evidence="1">
        <text>scyllo-inosose = 3D-3,5/4-trihydroxycyclohexane-1,2-dione + H2O</text>
        <dbReference type="Rhea" id="RHEA:14065"/>
        <dbReference type="ChEBI" id="CHEBI:15377"/>
        <dbReference type="ChEBI" id="CHEBI:17811"/>
        <dbReference type="ChEBI" id="CHEBI:28446"/>
        <dbReference type="EC" id="4.2.1.44"/>
    </reaction>
</comment>
<comment type="cofactor">
    <cofactor evidence="1">
        <name>glutathione</name>
        <dbReference type="ChEBI" id="CHEBI:57925"/>
    </cofactor>
</comment>
<comment type="cofactor">
    <cofactor evidence="1">
        <name>Co(2+)</name>
        <dbReference type="ChEBI" id="CHEBI:48828"/>
    </cofactor>
    <cofactor evidence="1">
        <name>Mn(2+)</name>
        <dbReference type="ChEBI" id="CHEBI:29035"/>
    </cofactor>
</comment>
<comment type="pathway">
    <text evidence="1">Polyol metabolism; myo-inositol degradation into acetyl-CoA; acetyl-CoA from myo-inositol: step 2/7.</text>
</comment>
<comment type="similarity">
    <text evidence="1">Belongs to the IolE/MocC family.</text>
</comment>
<feature type="chain" id="PRO_0000352365" description="Inosose dehydratase">
    <location>
        <begin position="1"/>
        <end position="297"/>
    </location>
</feature>
<evidence type="ECO:0000255" key="1">
    <source>
        <dbReference type="HAMAP-Rule" id="MF_01672"/>
    </source>
</evidence>
<gene>
    <name evidence="1" type="primary">iolE</name>
    <name type="ordered locus">CPF_0086</name>
</gene>
<name>IOLE_CLOP1</name>
<sequence length="297" mass="33753">MFNSNVKLGIAPIAWTNDDMPDLGKENTFEQCISEMALAGFKGSEVGNKYPRDVKVLKKALELRDMEIASAWFSAFLTTKPYEETEKAFIEHRDFLNAMGAKVIVVSEQGHSIQGQMETPIFDGKYVLNEEEWKTLAEGLNKLGALAKEKGMKLVYHHHMGTVVQTTEEIDKLMDLTDENLVYLLFDSGHLVYSGEDALEVLKKYVNRVKHVHLKDIRKEKVEEVKRDKLSFLQGVRKGAFTVPGDGDIDFEPIFKVLDDNNYEGYLLVEAEQDPAIANPLEYAIKARKYIKEKTNL</sequence>